<proteinExistence type="evidence at protein level"/>
<name>HNL_ARATH</name>
<evidence type="ECO:0000250" key="1"/>
<evidence type="ECO:0000250" key="2">
    <source>
        <dbReference type="UniProtKB" id="P52704"/>
    </source>
</evidence>
<evidence type="ECO:0000269" key="3">
    <source>
    </source>
</evidence>
<evidence type="ECO:0000269" key="4">
    <source>
    </source>
</evidence>
<evidence type="ECO:0000269" key="5">
    <source>
    </source>
</evidence>
<evidence type="ECO:0000269" key="6">
    <source>
    </source>
</evidence>
<evidence type="ECO:0000303" key="7">
    <source>
    </source>
</evidence>
<evidence type="ECO:0000303" key="8">
    <source>
    </source>
</evidence>
<evidence type="ECO:0000305" key="9"/>
<evidence type="ECO:0000305" key="10">
    <source>
    </source>
</evidence>
<evidence type="ECO:0000312" key="11">
    <source>
        <dbReference type="Araport" id="AT5G10300"/>
    </source>
</evidence>
<evidence type="ECO:0000312" key="12">
    <source>
        <dbReference type="EMBL" id="CAB96686.1"/>
    </source>
</evidence>
<evidence type="ECO:0007829" key="13">
    <source>
        <dbReference type="PDB" id="6COF"/>
    </source>
</evidence>
<gene>
    <name evidence="7" type="primary">HNL</name>
    <name evidence="8" type="synonym">MES5</name>
    <name evidence="11" type="ordered locus">At5g10300</name>
    <name evidence="12" type="ORF">F18D22_70</name>
</gene>
<accession>Q9LFT6</accession>
<accession>Q93Z57</accession>
<accession>Q94AI5</accession>
<feature type="chain" id="PRO_0000418174" description="Alpha-hydroxynitrile lyase">
    <location>
        <begin position="1"/>
        <end position="258"/>
    </location>
</feature>
<feature type="active site" description="Proton donor/acceptor" evidence="2">
    <location>
        <position position="81"/>
    </location>
</feature>
<feature type="active site" description="Proton donor/acceptor" evidence="2">
    <location>
        <position position="236"/>
    </location>
</feature>
<feature type="site" description="Increases basicity of active site His" evidence="2">
    <location>
        <position position="208"/>
    </location>
</feature>
<feature type="mutagenesis site" description="Loss of activity." evidence="3">
    <original>S</original>
    <variation>A</variation>
    <location>
        <position position="81"/>
    </location>
</feature>
<feature type="mutagenesis site" description="Loss of activity." evidence="3">
    <original>D</original>
    <variation>N</variation>
    <location>
        <position position="208"/>
    </location>
</feature>
<feature type="mutagenesis site" description="Loss of activity." evidence="3">
    <original>H</original>
    <variation>F</variation>
    <location>
        <position position="236"/>
    </location>
</feature>
<feature type="sequence conflict" description="In Ref. 3; AAL25532." evidence="9" ref="3">
    <original>P</original>
    <variation>Q</variation>
    <location>
        <position position="70"/>
    </location>
</feature>
<feature type="sequence conflict" description="In Ref. 3; AAL25532." evidence="9" ref="3">
    <original>V</original>
    <variation>G</variation>
    <location>
        <position position="75"/>
    </location>
</feature>
<feature type="sequence conflict" description="In Ref. 3; AAK76689." evidence="9" ref="3">
    <original>G</original>
    <variation>R</variation>
    <location>
        <position position="177"/>
    </location>
</feature>
<feature type="strand" evidence="13">
    <location>
        <begin position="6"/>
        <end position="10"/>
    </location>
</feature>
<feature type="helix" evidence="13">
    <location>
        <begin position="17"/>
        <end position="20"/>
    </location>
</feature>
<feature type="helix" evidence="13">
    <location>
        <begin position="23"/>
        <end position="29"/>
    </location>
</feature>
<feature type="strand" evidence="13">
    <location>
        <begin position="33"/>
        <end position="37"/>
    </location>
</feature>
<feature type="helix" evidence="13">
    <location>
        <begin position="49"/>
        <end position="51"/>
    </location>
</feature>
<feature type="helix" evidence="13">
    <location>
        <begin position="55"/>
        <end position="67"/>
    </location>
</feature>
<feature type="strand" evidence="13">
    <location>
        <begin position="75"/>
        <end position="80"/>
    </location>
</feature>
<feature type="helix" evidence="13">
    <location>
        <begin position="83"/>
        <end position="93"/>
    </location>
</feature>
<feature type="helix" evidence="13">
    <location>
        <begin position="95"/>
        <end position="97"/>
    </location>
</feature>
<feature type="strand" evidence="13">
    <location>
        <begin position="98"/>
        <end position="105"/>
    </location>
</feature>
<feature type="strand" evidence="13">
    <location>
        <begin position="111"/>
        <end position="113"/>
    </location>
</feature>
<feature type="helix" evidence="13">
    <location>
        <begin position="117"/>
        <end position="125"/>
    </location>
</feature>
<feature type="strand" evidence="13">
    <location>
        <begin position="133"/>
        <end position="139"/>
    </location>
</feature>
<feature type="strand" evidence="13">
    <location>
        <begin position="142"/>
        <end position="148"/>
    </location>
</feature>
<feature type="helix" evidence="13">
    <location>
        <begin position="151"/>
        <end position="157"/>
    </location>
</feature>
<feature type="helix" evidence="13">
    <location>
        <begin position="164"/>
        <end position="173"/>
    </location>
</feature>
<feature type="helix" evidence="13">
    <location>
        <begin position="181"/>
        <end position="186"/>
    </location>
</feature>
<feature type="turn" evidence="13">
    <location>
        <begin position="192"/>
        <end position="194"/>
    </location>
</feature>
<feature type="helix" evidence="13">
    <location>
        <begin position="195"/>
        <end position="197"/>
    </location>
</feature>
<feature type="strand" evidence="13">
    <location>
        <begin position="200"/>
        <end position="205"/>
    </location>
</feature>
<feature type="strand" evidence="13">
    <location>
        <begin position="209"/>
        <end position="211"/>
    </location>
</feature>
<feature type="helix" evidence="13">
    <location>
        <begin position="213"/>
        <end position="222"/>
    </location>
</feature>
<feature type="strand" evidence="13">
    <location>
        <begin position="228"/>
        <end position="231"/>
    </location>
</feature>
<feature type="helix" evidence="13">
    <location>
        <begin position="238"/>
        <end position="241"/>
    </location>
</feature>
<feature type="helix" evidence="13">
    <location>
        <begin position="243"/>
        <end position="256"/>
    </location>
</feature>
<sequence>MERKHHFVLVHNAYHGAWIWYKLKPLLESAGHRVTAVELAASGIDPRPIQAVETVDEYSKPLIETLKSLPENEEVILVGFSFGGINIALAADIFPAKIKVLVFLNAFLPDTTHVPSHVLDKYMEMPGGLGDCEFSSHETRNGTMSLLKMGPKFMKARLYQNCPIEDYELAKMLHRQGSFFTEDLSKKEKFSEEGYGSVQRVYVMSSEDKAIPCDFIRWMIDNFNVSKVYEIDGGDHMVMLSKPQKLFDSLSAIATDYM</sequence>
<reference key="1">
    <citation type="journal article" date="2000" name="Nature">
        <title>Sequence and analysis of chromosome 5 of the plant Arabidopsis thaliana.</title>
        <authorList>
            <person name="Tabata S."/>
            <person name="Kaneko T."/>
            <person name="Nakamura Y."/>
            <person name="Kotani H."/>
            <person name="Kato T."/>
            <person name="Asamizu E."/>
            <person name="Miyajima N."/>
            <person name="Sasamoto S."/>
            <person name="Kimura T."/>
            <person name="Hosouchi T."/>
            <person name="Kawashima K."/>
            <person name="Kohara M."/>
            <person name="Matsumoto M."/>
            <person name="Matsuno A."/>
            <person name="Muraki A."/>
            <person name="Nakayama S."/>
            <person name="Nakazaki N."/>
            <person name="Naruo K."/>
            <person name="Okumura S."/>
            <person name="Shinpo S."/>
            <person name="Takeuchi C."/>
            <person name="Wada T."/>
            <person name="Watanabe A."/>
            <person name="Yamada M."/>
            <person name="Yasuda M."/>
            <person name="Sato S."/>
            <person name="de la Bastide M."/>
            <person name="Huang E."/>
            <person name="Spiegel L."/>
            <person name="Gnoj L."/>
            <person name="O'Shaughnessy A."/>
            <person name="Preston R."/>
            <person name="Habermann K."/>
            <person name="Murray J."/>
            <person name="Johnson D."/>
            <person name="Rohlfing T."/>
            <person name="Nelson J."/>
            <person name="Stoneking T."/>
            <person name="Pepin K."/>
            <person name="Spieth J."/>
            <person name="Sekhon M."/>
            <person name="Armstrong J."/>
            <person name="Becker M."/>
            <person name="Belter E."/>
            <person name="Cordum H."/>
            <person name="Cordes M."/>
            <person name="Courtney L."/>
            <person name="Courtney W."/>
            <person name="Dante M."/>
            <person name="Du H."/>
            <person name="Edwards J."/>
            <person name="Fryman J."/>
            <person name="Haakensen B."/>
            <person name="Lamar E."/>
            <person name="Latreille P."/>
            <person name="Leonard S."/>
            <person name="Meyer R."/>
            <person name="Mulvaney E."/>
            <person name="Ozersky P."/>
            <person name="Riley A."/>
            <person name="Strowmatt C."/>
            <person name="Wagner-McPherson C."/>
            <person name="Wollam A."/>
            <person name="Yoakum M."/>
            <person name="Bell M."/>
            <person name="Dedhia N."/>
            <person name="Parnell L."/>
            <person name="Shah R."/>
            <person name="Rodriguez M."/>
            <person name="Hoon See L."/>
            <person name="Vil D."/>
            <person name="Baker J."/>
            <person name="Kirchoff K."/>
            <person name="Toth K."/>
            <person name="King L."/>
            <person name="Bahret A."/>
            <person name="Miller B."/>
            <person name="Marra M.A."/>
            <person name="Martienssen R."/>
            <person name="McCombie W.R."/>
            <person name="Wilson R.K."/>
            <person name="Murphy G."/>
            <person name="Bancroft I."/>
            <person name="Volckaert G."/>
            <person name="Wambutt R."/>
            <person name="Duesterhoeft A."/>
            <person name="Stiekema W."/>
            <person name="Pohl T."/>
            <person name="Entian K.-D."/>
            <person name="Terryn N."/>
            <person name="Hartley N."/>
            <person name="Bent E."/>
            <person name="Johnson S."/>
            <person name="Langham S.-A."/>
            <person name="McCullagh B."/>
            <person name="Robben J."/>
            <person name="Grymonprez B."/>
            <person name="Zimmermann W."/>
            <person name="Ramsperger U."/>
            <person name="Wedler H."/>
            <person name="Balke K."/>
            <person name="Wedler E."/>
            <person name="Peters S."/>
            <person name="van Staveren M."/>
            <person name="Dirkse W."/>
            <person name="Mooijman P."/>
            <person name="Klein Lankhorst R."/>
            <person name="Weitzenegger T."/>
            <person name="Bothe G."/>
            <person name="Rose M."/>
            <person name="Hauf J."/>
            <person name="Berneiser S."/>
            <person name="Hempel S."/>
            <person name="Feldpausch M."/>
            <person name="Lamberth S."/>
            <person name="Villarroel R."/>
            <person name="Gielen J."/>
            <person name="Ardiles W."/>
            <person name="Bents O."/>
            <person name="Lemcke K."/>
            <person name="Kolesov G."/>
            <person name="Mayer K.F.X."/>
            <person name="Rudd S."/>
            <person name="Schoof H."/>
            <person name="Schueller C."/>
            <person name="Zaccaria P."/>
            <person name="Mewes H.-W."/>
            <person name="Bevan M."/>
            <person name="Fransz P.F."/>
        </authorList>
    </citation>
    <scope>NUCLEOTIDE SEQUENCE [LARGE SCALE GENOMIC DNA]</scope>
    <source>
        <strain>cv. Columbia</strain>
    </source>
</reference>
<reference key="2">
    <citation type="journal article" date="2017" name="Plant J.">
        <title>Araport11: a complete reannotation of the Arabidopsis thaliana reference genome.</title>
        <authorList>
            <person name="Cheng C.Y."/>
            <person name="Krishnakumar V."/>
            <person name="Chan A.P."/>
            <person name="Thibaud-Nissen F."/>
            <person name="Schobel S."/>
            <person name="Town C.D."/>
        </authorList>
    </citation>
    <scope>GENOME REANNOTATION</scope>
    <source>
        <strain>cv. Columbia</strain>
    </source>
</reference>
<reference key="3">
    <citation type="journal article" date="2003" name="Science">
        <title>Empirical analysis of transcriptional activity in the Arabidopsis genome.</title>
        <authorList>
            <person name="Yamada K."/>
            <person name="Lim J."/>
            <person name="Dale J.M."/>
            <person name="Chen H."/>
            <person name="Shinn P."/>
            <person name="Palm C.J."/>
            <person name="Southwick A.M."/>
            <person name="Wu H.C."/>
            <person name="Kim C.J."/>
            <person name="Nguyen M."/>
            <person name="Pham P.K."/>
            <person name="Cheuk R.F."/>
            <person name="Karlin-Newmann G."/>
            <person name="Liu S.X."/>
            <person name="Lam B."/>
            <person name="Sakano H."/>
            <person name="Wu T."/>
            <person name="Yu G."/>
            <person name="Miranda M."/>
            <person name="Quach H.L."/>
            <person name="Tripp M."/>
            <person name="Chang C.H."/>
            <person name="Lee J.M."/>
            <person name="Toriumi M.J."/>
            <person name="Chan M.M."/>
            <person name="Tang C.C."/>
            <person name="Onodera C.S."/>
            <person name="Deng J.M."/>
            <person name="Akiyama K."/>
            <person name="Ansari Y."/>
            <person name="Arakawa T."/>
            <person name="Banh J."/>
            <person name="Banno F."/>
            <person name="Bowser L."/>
            <person name="Brooks S.Y."/>
            <person name="Carninci P."/>
            <person name="Chao Q."/>
            <person name="Choy N."/>
            <person name="Enju A."/>
            <person name="Goldsmith A.D."/>
            <person name="Gurjal M."/>
            <person name="Hansen N.F."/>
            <person name="Hayashizaki Y."/>
            <person name="Johnson-Hopson C."/>
            <person name="Hsuan V.W."/>
            <person name="Iida K."/>
            <person name="Karnes M."/>
            <person name="Khan S."/>
            <person name="Koesema E."/>
            <person name="Ishida J."/>
            <person name="Jiang P.X."/>
            <person name="Jones T."/>
            <person name="Kawai J."/>
            <person name="Kamiya A."/>
            <person name="Meyers C."/>
            <person name="Nakajima M."/>
            <person name="Narusaka M."/>
            <person name="Seki M."/>
            <person name="Sakurai T."/>
            <person name="Satou M."/>
            <person name="Tamse R."/>
            <person name="Vaysberg M."/>
            <person name="Wallender E.K."/>
            <person name="Wong C."/>
            <person name="Yamamura Y."/>
            <person name="Yuan S."/>
            <person name="Shinozaki K."/>
            <person name="Davis R.W."/>
            <person name="Theologis A."/>
            <person name="Ecker J.R."/>
        </authorList>
    </citation>
    <scope>NUCLEOTIDE SEQUENCE [LARGE SCALE MRNA]</scope>
    <source>
        <strain>cv. Columbia</strain>
    </source>
</reference>
<reference key="4">
    <citation type="submission" date="2006-07" db="EMBL/GenBank/DDBJ databases">
        <title>Large-scale analysis of RIKEN Arabidopsis full-length (RAFL) cDNAs.</title>
        <authorList>
            <person name="Totoki Y."/>
            <person name="Seki M."/>
            <person name="Ishida J."/>
            <person name="Nakajima M."/>
            <person name="Enju A."/>
            <person name="Kamiya A."/>
            <person name="Narusaka M."/>
            <person name="Shin-i T."/>
            <person name="Nakagawa M."/>
            <person name="Sakamoto N."/>
            <person name="Oishi K."/>
            <person name="Kohara Y."/>
            <person name="Kobayashi M."/>
            <person name="Toyoda A."/>
            <person name="Sakaki Y."/>
            <person name="Sakurai T."/>
            <person name="Iida K."/>
            <person name="Akiyama K."/>
            <person name="Satou M."/>
            <person name="Toyoda T."/>
            <person name="Konagaya A."/>
            <person name="Carninci P."/>
            <person name="Kawai J."/>
            <person name="Hayashizaki Y."/>
            <person name="Shinozaki K."/>
        </authorList>
    </citation>
    <scope>NUCLEOTIDE SEQUENCE [LARGE SCALE MRNA]</scope>
    <source>
        <strain>cv. Columbia</strain>
    </source>
</reference>
<reference key="5">
    <citation type="journal article" date="2008" name="Plant Physiol.">
        <title>Inactive methyl indole-3-acetic acid ester can be hydrolyzed and activated by several esterases belonging to the AtMES esterase family of Arabidopsis.</title>
        <authorList>
            <person name="Yang Y."/>
            <person name="Xu R."/>
            <person name="Ma C.J."/>
            <person name="Vlot A.C."/>
            <person name="Klessig D.F."/>
            <person name="Pichersky E."/>
        </authorList>
    </citation>
    <scope>GENE FAMILY</scope>
    <scope>FUNCTION</scope>
</reference>
<reference key="6">
    <citation type="journal article" date="2009" name="J. Biotechnol.">
        <title>Uneven twins: comparison of two enantiocomplementary hydroxynitrile lyases with alpha/beta-hydrolase fold.</title>
        <authorList>
            <person name="Guterl J.K."/>
            <person name="Andexer J.N."/>
            <person name="Sehl T."/>
            <person name="von Langermann J."/>
            <person name="Frindi-Wosch I."/>
            <person name="Rosenkranz T."/>
            <person name="Fitter J."/>
            <person name="Gruber K."/>
            <person name="Kragl U."/>
            <person name="Eggert T."/>
            <person name="Pohl M."/>
        </authorList>
    </citation>
    <scope>FUNCTION</scope>
    <scope>BIOPHYSICOCHEMICAL PROPERTIES</scope>
</reference>
<reference key="7">
    <citation type="journal article" date="2011" name="J. Biotechnol.">
        <title>Synthesis of (R)-?-nitro alcohols catalyzed by R-selective hydroxynitrile lyase from Arabidopsis thaliana in the aqueous-organic biphasic system.</title>
        <authorList>
            <person name="Fuhshuku K."/>
            <person name="Asano Y."/>
        </authorList>
    </citation>
    <scope>FUNCTION</scope>
</reference>
<reference key="8">
    <citation type="journal article" date="2007" name="Angew. Chem. Int. Ed. Engl.">
        <title>An R-selective hydroxynitrile lyase from Arabidopsis thaliana with an alpha/beta-hydrolase fold.</title>
        <authorList>
            <person name="Andexer J."/>
            <person name="von Langermann J."/>
            <person name="Mell A."/>
            <person name="Bocola M."/>
            <person name="Kragl U."/>
            <person name="Eggert T."/>
            <person name="Pohl M."/>
        </authorList>
    </citation>
    <scope>X-RAY CRYSTALLOGRAPHY (2.50 ANGSTROMS)</scope>
    <scope>FUNCTION</scope>
    <scope>CATALYTIC ACTIVITY</scope>
    <scope>MUTAGENESIS OF SER-81; ASP-208 AND HIS-236</scope>
</reference>
<dbReference type="EC" id="4.1.2.10" evidence="3"/>
<dbReference type="EMBL" id="AL360334">
    <property type="protein sequence ID" value="CAB96686.1"/>
    <property type="molecule type" value="Genomic_DNA"/>
</dbReference>
<dbReference type="EMBL" id="CP002688">
    <property type="protein sequence ID" value="AED91518.1"/>
    <property type="molecule type" value="Genomic_DNA"/>
</dbReference>
<dbReference type="EMBL" id="AY046015">
    <property type="protein sequence ID" value="AAK76689.1"/>
    <property type="molecule type" value="mRNA"/>
</dbReference>
<dbReference type="EMBL" id="AY058115">
    <property type="protein sequence ID" value="AAL25532.1"/>
    <property type="molecule type" value="mRNA"/>
</dbReference>
<dbReference type="EMBL" id="AY093714">
    <property type="protein sequence ID" value="AAM10338.1"/>
    <property type="molecule type" value="mRNA"/>
</dbReference>
<dbReference type="EMBL" id="AY142490">
    <property type="protein sequence ID" value="AAN13041.1"/>
    <property type="molecule type" value="mRNA"/>
</dbReference>
<dbReference type="EMBL" id="AK226255">
    <property type="protein sequence ID" value="BAE98416.1"/>
    <property type="molecule type" value="mRNA"/>
</dbReference>
<dbReference type="PIR" id="T50818">
    <property type="entry name" value="T50818"/>
</dbReference>
<dbReference type="RefSeq" id="NP_196592.1">
    <property type="nucleotide sequence ID" value="NM_121068.4"/>
</dbReference>
<dbReference type="PDB" id="3DQZ">
    <property type="method" value="X-ray"/>
    <property type="resolution" value="2.50 A"/>
    <property type="chains" value="A/B/C/D=1-258"/>
</dbReference>
<dbReference type="PDB" id="6COB">
    <property type="method" value="X-ray"/>
    <property type="resolution" value="1.82 A"/>
    <property type="chains" value="A/B=1-258"/>
</dbReference>
<dbReference type="PDB" id="6COC">
    <property type="method" value="X-ray"/>
    <property type="resolution" value="1.93 A"/>
    <property type="chains" value="A/B=1-258"/>
</dbReference>
<dbReference type="PDB" id="6COD">
    <property type="method" value="X-ray"/>
    <property type="resolution" value="1.80 A"/>
    <property type="chains" value="A/B=1-258"/>
</dbReference>
<dbReference type="PDB" id="6COE">
    <property type="method" value="X-ray"/>
    <property type="resolution" value="1.84 A"/>
    <property type="chains" value="A/B=1-258"/>
</dbReference>
<dbReference type="PDB" id="6COF">
    <property type="method" value="X-ray"/>
    <property type="resolution" value="1.52 A"/>
    <property type="chains" value="A/B=1-258"/>
</dbReference>
<dbReference type="PDB" id="6COG">
    <property type="method" value="X-ray"/>
    <property type="resolution" value="1.80 A"/>
    <property type="chains" value="A/B=1-258"/>
</dbReference>
<dbReference type="PDB" id="6COH">
    <property type="method" value="X-ray"/>
    <property type="resolution" value="2.37 A"/>
    <property type="chains" value="A/B=1-258"/>
</dbReference>
<dbReference type="PDB" id="6COI">
    <property type="method" value="X-ray"/>
    <property type="resolution" value="2.02 A"/>
    <property type="chains" value="A/B=1-258"/>
</dbReference>
<dbReference type="PDBsum" id="3DQZ"/>
<dbReference type="PDBsum" id="6COB"/>
<dbReference type="PDBsum" id="6COC"/>
<dbReference type="PDBsum" id="6COD"/>
<dbReference type="PDBsum" id="6COE"/>
<dbReference type="PDBsum" id="6COF"/>
<dbReference type="PDBsum" id="6COG"/>
<dbReference type="PDBsum" id="6COH"/>
<dbReference type="PDBsum" id="6COI"/>
<dbReference type="SMR" id="Q9LFT6"/>
<dbReference type="BioGRID" id="16172">
    <property type="interactions" value="1"/>
</dbReference>
<dbReference type="FunCoup" id="Q9LFT6">
    <property type="interactions" value="70"/>
</dbReference>
<dbReference type="IntAct" id="Q9LFT6">
    <property type="interactions" value="1"/>
</dbReference>
<dbReference type="STRING" id="3702.Q9LFT6"/>
<dbReference type="ESTHER" id="arath-HNL">
    <property type="family name" value="Hydroxynitrile_lyase"/>
</dbReference>
<dbReference type="PaxDb" id="3702-AT5G10300.1"/>
<dbReference type="ProteomicsDB" id="230261"/>
<dbReference type="EnsemblPlants" id="AT5G10300.1">
    <property type="protein sequence ID" value="AT5G10300.1"/>
    <property type="gene ID" value="AT5G10300"/>
</dbReference>
<dbReference type="GeneID" id="830894"/>
<dbReference type="Gramene" id="AT5G10300.1">
    <property type="protein sequence ID" value="AT5G10300.1"/>
    <property type="gene ID" value="AT5G10300"/>
</dbReference>
<dbReference type="KEGG" id="ath:AT5G10300"/>
<dbReference type="Araport" id="AT5G10300"/>
<dbReference type="TAIR" id="AT5G10300">
    <property type="gene designation" value="MES5"/>
</dbReference>
<dbReference type="eggNOG" id="ENOG502QR2J">
    <property type="taxonomic scope" value="Eukaryota"/>
</dbReference>
<dbReference type="HOGENOM" id="CLU_046066_0_1_1"/>
<dbReference type="InParanoid" id="Q9LFT6"/>
<dbReference type="OMA" id="ECTVQDY"/>
<dbReference type="OrthoDB" id="408373at2759"/>
<dbReference type="PhylomeDB" id="Q9LFT6"/>
<dbReference type="BioCyc" id="ARA:AT5G10300-MONOMER"/>
<dbReference type="BRENDA" id="4.1.2.10">
    <property type="organism ID" value="399"/>
</dbReference>
<dbReference type="SABIO-RK" id="Q9LFT6"/>
<dbReference type="EvolutionaryTrace" id="Q9LFT6"/>
<dbReference type="PRO" id="PR:Q9LFT6"/>
<dbReference type="Proteomes" id="UP000006548">
    <property type="component" value="Chromosome 5"/>
</dbReference>
<dbReference type="ExpressionAtlas" id="Q9LFT6">
    <property type="expression patterns" value="baseline and differential"/>
</dbReference>
<dbReference type="GO" id="GO:0046593">
    <property type="term" value="F:mandelonitrile lyase activity"/>
    <property type="evidence" value="ECO:0000314"/>
    <property type="project" value="TAIR"/>
</dbReference>
<dbReference type="GO" id="GO:0016139">
    <property type="term" value="P:glycoside catabolic process"/>
    <property type="evidence" value="ECO:0000314"/>
    <property type="project" value="TAIR"/>
</dbReference>
<dbReference type="GO" id="GO:0009611">
    <property type="term" value="P:response to wounding"/>
    <property type="evidence" value="ECO:0000270"/>
    <property type="project" value="TAIR"/>
</dbReference>
<dbReference type="FunFam" id="3.40.50.1820:FF:000051">
    <property type="entry name" value="(S)-hydroxynitrile lyase"/>
    <property type="match status" value="1"/>
</dbReference>
<dbReference type="Gene3D" id="3.40.50.1820">
    <property type="entry name" value="alpha/beta hydrolase"/>
    <property type="match status" value="1"/>
</dbReference>
<dbReference type="InterPro" id="IPR000073">
    <property type="entry name" value="AB_hydrolase_1"/>
</dbReference>
<dbReference type="InterPro" id="IPR029058">
    <property type="entry name" value="AB_hydrolase_fold"/>
</dbReference>
<dbReference type="InterPro" id="IPR045889">
    <property type="entry name" value="MES/HNL"/>
</dbReference>
<dbReference type="PANTHER" id="PTHR10992:SF1013">
    <property type="entry name" value="ALPHA-HYDROXYNITRILE LYASE"/>
    <property type="match status" value="1"/>
</dbReference>
<dbReference type="PANTHER" id="PTHR10992">
    <property type="entry name" value="METHYLESTERASE FAMILY MEMBER"/>
    <property type="match status" value="1"/>
</dbReference>
<dbReference type="Pfam" id="PF00561">
    <property type="entry name" value="Abhydrolase_1"/>
    <property type="match status" value="1"/>
</dbReference>
<dbReference type="SUPFAM" id="SSF53474">
    <property type="entry name" value="alpha/beta-Hydrolases"/>
    <property type="match status" value="1"/>
</dbReference>
<keyword id="KW-0002">3D-structure</keyword>
<keyword id="KW-0456">Lyase</keyword>
<keyword id="KW-1185">Reference proteome</keyword>
<protein>
    <recommendedName>
        <fullName evidence="7">Alpha-hydroxynitrile lyase</fullName>
        <shortName evidence="7">AtHNL</shortName>
        <ecNumber evidence="3">4.1.2.10</ecNumber>
    </recommendedName>
    <alternativeName>
        <fullName evidence="7">(R)-hydroxynitrile lyase</fullName>
    </alternativeName>
    <alternativeName>
        <fullName evidence="7">(R)-oxynitrilase</fullName>
    </alternativeName>
    <alternativeName>
        <fullName evidence="8">Methylesterase 5</fullName>
        <shortName evidence="8">AtMES5</shortName>
    </alternativeName>
</protein>
<comment type="function">
    <text evidence="1 3 4 5 6">Involved in cyanogenesis, the release of HCN from injured tissues (By similarity). Displays R-selective hydroxynitrile lyase activity. Also accepts nitromethane (MeNO2) as a donor in a reaction with aromatic aldehydes to yield (R)-beta-nitro alcohols.</text>
</comment>
<comment type="catalytic activity">
    <reaction evidence="3">
        <text>(R)-mandelonitrile = benzaldehyde + hydrogen cyanide</text>
        <dbReference type="Rhea" id="RHEA:18313"/>
        <dbReference type="ChEBI" id="CHEBI:17169"/>
        <dbReference type="ChEBI" id="CHEBI:18407"/>
        <dbReference type="ChEBI" id="CHEBI:18450"/>
        <dbReference type="EC" id="4.1.2.10"/>
    </reaction>
</comment>
<comment type="biophysicochemical properties">
    <kinetics>
        <KM evidence="5">1.4 mM for mandelonitrile</KM>
    </kinetics>
</comment>
<comment type="subunit">
    <text evidence="1">Homodimer.</text>
</comment>
<comment type="interaction">
    <interactant intactId="EBI-4453194">
        <id>Q9LFT6</id>
    </interactant>
    <interactant intactId="EBI-4446268">
        <id>O23171</id>
        <label>MES9</label>
    </interactant>
    <organismsDiffer>false</organismsDiffer>
    <experiments>3</experiments>
</comment>
<comment type="similarity">
    <text evidence="9">Belongs to the AB hydrolase superfamily. Hydroxynitrile lyase family.</text>
</comment>
<comment type="caution">
    <text evidence="10">Was originally thought to belong to the methylesterase (MES) family.</text>
</comment>
<organism>
    <name type="scientific">Arabidopsis thaliana</name>
    <name type="common">Mouse-ear cress</name>
    <dbReference type="NCBI Taxonomy" id="3702"/>
    <lineage>
        <taxon>Eukaryota</taxon>
        <taxon>Viridiplantae</taxon>
        <taxon>Streptophyta</taxon>
        <taxon>Embryophyta</taxon>
        <taxon>Tracheophyta</taxon>
        <taxon>Spermatophyta</taxon>
        <taxon>Magnoliopsida</taxon>
        <taxon>eudicotyledons</taxon>
        <taxon>Gunneridae</taxon>
        <taxon>Pentapetalae</taxon>
        <taxon>rosids</taxon>
        <taxon>malvids</taxon>
        <taxon>Brassicales</taxon>
        <taxon>Brassicaceae</taxon>
        <taxon>Camelineae</taxon>
        <taxon>Arabidopsis</taxon>
    </lineage>
</organism>